<dbReference type="EC" id="6.1.1.18" evidence="1"/>
<dbReference type="EMBL" id="CP000948">
    <property type="protein sequence ID" value="ACB01891.1"/>
    <property type="molecule type" value="Genomic_DNA"/>
</dbReference>
<dbReference type="RefSeq" id="WP_001287154.1">
    <property type="nucleotide sequence ID" value="NC_010473.1"/>
</dbReference>
<dbReference type="SMR" id="B1X6L3"/>
<dbReference type="GeneID" id="93776805"/>
<dbReference type="KEGG" id="ecd:ECDH10B_0745"/>
<dbReference type="HOGENOM" id="CLU_001882_2_3_6"/>
<dbReference type="GO" id="GO:0005829">
    <property type="term" value="C:cytosol"/>
    <property type="evidence" value="ECO:0007669"/>
    <property type="project" value="TreeGrafter"/>
</dbReference>
<dbReference type="GO" id="GO:0005524">
    <property type="term" value="F:ATP binding"/>
    <property type="evidence" value="ECO:0007669"/>
    <property type="project" value="UniProtKB-UniRule"/>
</dbReference>
<dbReference type="GO" id="GO:0004819">
    <property type="term" value="F:glutamine-tRNA ligase activity"/>
    <property type="evidence" value="ECO:0007669"/>
    <property type="project" value="UniProtKB-UniRule"/>
</dbReference>
<dbReference type="GO" id="GO:0006425">
    <property type="term" value="P:glutaminyl-tRNA aminoacylation"/>
    <property type="evidence" value="ECO:0007669"/>
    <property type="project" value="InterPro"/>
</dbReference>
<dbReference type="GO" id="GO:0006424">
    <property type="term" value="P:glutamyl-tRNA aminoacylation"/>
    <property type="evidence" value="ECO:0007669"/>
    <property type="project" value="UniProtKB-UniRule"/>
</dbReference>
<dbReference type="CDD" id="cd00807">
    <property type="entry name" value="GlnRS_core"/>
    <property type="match status" value="1"/>
</dbReference>
<dbReference type="FunFam" id="1.10.1160.10:FF:000001">
    <property type="entry name" value="Glutamine--tRNA ligase"/>
    <property type="match status" value="1"/>
</dbReference>
<dbReference type="FunFam" id="2.40.240.10:FF:000001">
    <property type="entry name" value="Glutamine--tRNA ligase"/>
    <property type="match status" value="1"/>
</dbReference>
<dbReference type="FunFam" id="2.40.240.10:FF:000003">
    <property type="entry name" value="Glutamine--tRNA ligase"/>
    <property type="match status" value="1"/>
</dbReference>
<dbReference type="FunFam" id="3.90.800.10:FF:000001">
    <property type="entry name" value="Glutamine--tRNA ligase"/>
    <property type="match status" value="1"/>
</dbReference>
<dbReference type="FunFam" id="3.40.50.620:FF:000037">
    <property type="entry name" value="Glutamine--tRNA ligase cytoplasmic"/>
    <property type="match status" value="1"/>
</dbReference>
<dbReference type="Gene3D" id="1.10.1160.10">
    <property type="entry name" value="Glutamyl-trna Synthetase, Domain 2"/>
    <property type="match status" value="1"/>
</dbReference>
<dbReference type="Gene3D" id="3.90.800.10">
    <property type="entry name" value="Glutamyl-tRNA Synthetase, Domain 3"/>
    <property type="match status" value="1"/>
</dbReference>
<dbReference type="Gene3D" id="3.40.50.620">
    <property type="entry name" value="HUPs"/>
    <property type="match status" value="1"/>
</dbReference>
<dbReference type="Gene3D" id="2.40.240.10">
    <property type="entry name" value="Ribosomal Protein L25, Chain P"/>
    <property type="match status" value="2"/>
</dbReference>
<dbReference type="HAMAP" id="MF_00126">
    <property type="entry name" value="Gln_tRNA_synth"/>
    <property type="match status" value="1"/>
</dbReference>
<dbReference type="InterPro" id="IPR001412">
    <property type="entry name" value="aa-tRNA-synth_I_CS"/>
</dbReference>
<dbReference type="InterPro" id="IPR004514">
    <property type="entry name" value="Gln-tRNA-synth"/>
</dbReference>
<dbReference type="InterPro" id="IPR050132">
    <property type="entry name" value="Gln/Glu-tRNA_Ligase"/>
</dbReference>
<dbReference type="InterPro" id="IPR022861">
    <property type="entry name" value="Gln_tRNA_ligase_bac"/>
</dbReference>
<dbReference type="InterPro" id="IPR000924">
    <property type="entry name" value="Glu/Gln-tRNA-synth"/>
</dbReference>
<dbReference type="InterPro" id="IPR020058">
    <property type="entry name" value="Glu/Gln-tRNA-synth_Ib_cat-dom"/>
</dbReference>
<dbReference type="InterPro" id="IPR020059">
    <property type="entry name" value="Glu/Gln-tRNA-synth_Ib_codon-bd"/>
</dbReference>
<dbReference type="InterPro" id="IPR020061">
    <property type="entry name" value="Glu_tRNA_lig_a-bdl"/>
</dbReference>
<dbReference type="InterPro" id="IPR020056">
    <property type="entry name" value="Rbsml_bL25/Gln-tRNA_synth_N"/>
</dbReference>
<dbReference type="InterPro" id="IPR011035">
    <property type="entry name" value="Ribosomal_bL25/Gln-tRNA_synth"/>
</dbReference>
<dbReference type="InterPro" id="IPR014729">
    <property type="entry name" value="Rossmann-like_a/b/a_fold"/>
</dbReference>
<dbReference type="InterPro" id="IPR049437">
    <property type="entry name" value="tRNA-synt_1c_C2"/>
</dbReference>
<dbReference type="NCBIfam" id="TIGR00440">
    <property type="entry name" value="glnS"/>
    <property type="match status" value="1"/>
</dbReference>
<dbReference type="NCBIfam" id="NF011291">
    <property type="entry name" value="PRK14703.1"/>
    <property type="match status" value="1"/>
</dbReference>
<dbReference type="PANTHER" id="PTHR43097:SF5">
    <property type="entry name" value="GLUTAMATE--TRNA LIGASE"/>
    <property type="match status" value="1"/>
</dbReference>
<dbReference type="PANTHER" id="PTHR43097">
    <property type="entry name" value="GLUTAMINE-TRNA LIGASE"/>
    <property type="match status" value="1"/>
</dbReference>
<dbReference type="Pfam" id="PF00749">
    <property type="entry name" value="tRNA-synt_1c"/>
    <property type="match status" value="1"/>
</dbReference>
<dbReference type="Pfam" id="PF03950">
    <property type="entry name" value="tRNA-synt_1c_C"/>
    <property type="match status" value="1"/>
</dbReference>
<dbReference type="Pfam" id="PF20974">
    <property type="entry name" value="tRNA-synt_1c_C2"/>
    <property type="match status" value="1"/>
</dbReference>
<dbReference type="PRINTS" id="PR00987">
    <property type="entry name" value="TRNASYNTHGLU"/>
</dbReference>
<dbReference type="SUPFAM" id="SSF52374">
    <property type="entry name" value="Nucleotidylyl transferase"/>
    <property type="match status" value="1"/>
</dbReference>
<dbReference type="SUPFAM" id="SSF50715">
    <property type="entry name" value="Ribosomal protein L25-like"/>
    <property type="match status" value="1"/>
</dbReference>
<dbReference type="PROSITE" id="PS00178">
    <property type="entry name" value="AA_TRNA_LIGASE_I"/>
    <property type="match status" value="1"/>
</dbReference>
<proteinExistence type="inferred from homology"/>
<accession>B1X6L3</accession>
<evidence type="ECO:0000255" key="1">
    <source>
        <dbReference type="HAMAP-Rule" id="MF_00126"/>
    </source>
</evidence>
<reference key="1">
    <citation type="journal article" date="2008" name="J. Bacteriol.">
        <title>The complete genome sequence of Escherichia coli DH10B: insights into the biology of a laboratory workhorse.</title>
        <authorList>
            <person name="Durfee T."/>
            <person name="Nelson R."/>
            <person name="Baldwin S."/>
            <person name="Plunkett G. III"/>
            <person name="Burland V."/>
            <person name="Mau B."/>
            <person name="Petrosino J.F."/>
            <person name="Qin X."/>
            <person name="Muzny D.M."/>
            <person name="Ayele M."/>
            <person name="Gibbs R.A."/>
            <person name="Csorgo B."/>
            <person name="Posfai G."/>
            <person name="Weinstock G.M."/>
            <person name="Blattner F.R."/>
        </authorList>
    </citation>
    <scope>NUCLEOTIDE SEQUENCE [LARGE SCALE GENOMIC DNA]</scope>
    <source>
        <strain>K12 / DH10B</strain>
    </source>
</reference>
<feature type="chain" id="PRO_1000095489" description="Glutamine--tRNA ligase">
    <location>
        <begin position="1"/>
        <end position="554"/>
    </location>
</feature>
<feature type="region of interest" description="Interaction with tRNA" evidence="1">
    <location>
        <begin position="317"/>
        <end position="324"/>
    </location>
</feature>
<feature type="short sequence motif" description="'HIGH' region" evidence="1">
    <location>
        <begin position="34"/>
        <end position="44"/>
    </location>
</feature>
<feature type="short sequence motif" description="'KMSKS' region" evidence="1">
    <location>
        <begin position="268"/>
        <end position="272"/>
    </location>
</feature>
<feature type="binding site" evidence="1">
    <location>
        <begin position="35"/>
        <end position="37"/>
    </location>
    <ligand>
        <name>ATP</name>
        <dbReference type="ChEBI" id="CHEBI:30616"/>
    </ligand>
</feature>
<feature type="binding site" evidence="1">
    <location>
        <begin position="41"/>
        <end position="47"/>
    </location>
    <ligand>
        <name>ATP</name>
        <dbReference type="ChEBI" id="CHEBI:30616"/>
    </ligand>
</feature>
<feature type="binding site" evidence="1">
    <location>
        <position position="67"/>
    </location>
    <ligand>
        <name>L-glutamine</name>
        <dbReference type="ChEBI" id="CHEBI:58359"/>
    </ligand>
</feature>
<feature type="binding site" evidence="1">
    <location>
        <position position="212"/>
    </location>
    <ligand>
        <name>L-glutamine</name>
        <dbReference type="ChEBI" id="CHEBI:58359"/>
    </ligand>
</feature>
<feature type="binding site" evidence="1">
    <location>
        <position position="231"/>
    </location>
    <ligand>
        <name>ATP</name>
        <dbReference type="ChEBI" id="CHEBI:30616"/>
    </ligand>
</feature>
<feature type="binding site" evidence="1">
    <location>
        <begin position="261"/>
        <end position="262"/>
    </location>
    <ligand>
        <name>ATP</name>
        <dbReference type="ChEBI" id="CHEBI:30616"/>
    </ligand>
</feature>
<feature type="binding site" evidence="1">
    <location>
        <begin position="269"/>
        <end position="271"/>
    </location>
    <ligand>
        <name>ATP</name>
        <dbReference type="ChEBI" id="CHEBI:30616"/>
    </ligand>
</feature>
<name>SYQ_ECODH</name>
<keyword id="KW-0030">Aminoacyl-tRNA synthetase</keyword>
<keyword id="KW-0067">ATP-binding</keyword>
<keyword id="KW-0963">Cytoplasm</keyword>
<keyword id="KW-0436">Ligase</keyword>
<keyword id="KW-0547">Nucleotide-binding</keyword>
<keyword id="KW-0648">Protein biosynthesis</keyword>
<sequence length="554" mass="63478">MSEAEARPTNFIRQIIDEDLASGKHTTVHTRFPPEPNGYLHIGHAKSICLNFGIAQDYKGQCNLRFDDTNPVKEDIEYVESIKNDVEWLGFHWSGNVRYSSDYFDQLHAYAIELINKGLAYVDELTPEQIREYRGTLTQPGKNSPYRDRSVEENLALFEKMRAGGFEEGKACLRAKIDMASPFIVMRDPVLYRIKFAEHHQTGNKWCIYPMYDFTHCISDALEGITHSLCTLEFQDNRRLYDWVLDNITIPVHPRQYEFSRLNLEYTVMSKRKLNLLVTDKHVEGWDDPRMPTISGLRRRGYTAASIREFCKRIGVTKQDNTIEMASLESCIREDLNENAPRAMAVIDPVKLVIENYQGEGEMVTMPNHPNKPEMGSRQVPFSGEIWIDRADFREEANKQYKRLVLGKEVRLRNAYVIKAERVEKDAEGNITTIFCTYDADTLSKDPADGRKVKGVIHWVSAAHALPVEIRLYDRLFSVPNPGAADDFLSVINPESLVIKQGFAEPSLKDAVAGKAFQFEREGYFCLDSRHSTAEKPVFNRTVGLRDTWAKVGE</sequence>
<protein>
    <recommendedName>
        <fullName evidence="1">Glutamine--tRNA ligase</fullName>
        <ecNumber evidence="1">6.1.1.18</ecNumber>
    </recommendedName>
    <alternativeName>
        <fullName evidence="1">Glutaminyl-tRNA synthetase</fullName>
        <shortName evidence="1">GlnRS</shortName>
    </alternativeName>
</protein>
<organism>
    <name type="scientific">Escherichia coli (strain K12 / DH10B)</name>
    <dbReference type="NCBI Taxonomy" id="316385"/>
    <lineage>
        <taxon>Bacteria</taxon>
        <taxon>Pseudomonadati</taxon>
        <taxon>Pseudomonadota</taxon>
        <taxon>Gammaproteobacteria</taxon>
        <taxon>Enterobacterales</taxon>
        <taxon>Enterobacteriaceae</taxon>
        <taxon>Escherichia</taxon>
    </lineage>
</organism>
<comment type="catalytic activity">
    <reaction evidence="1">
        <text>tRNA(Gln) + L-glutamine + ATP = L-glutaminyl-tRNA(Gln) + AMP + diphosphate</text>
        <dbReference type="Rhea" id="RHEA:20121"/>
        <dbReference type="Rhea" id="RHEA-COMP:9662"/>
        <dbReference type="Rhea" id="RHEA-COMP:9681"/>
        <dbReference type="ChEBI" id="CHEBI:30616"/>
        <dbReference type="ChEBI" id="CHEBI:33019"/>
        <dbReference type="ChEBI" id="CHEBI:58359"/>
        <dbReference type="ChEBI" id="CHEBI:78442"/>
        <dbReference type="ChEBI" id="CHEBI:78521"/>
        <dbReference type="ChEBI" id="CHEBI:456215"/>
        <dbReference type="EC" id="6.1.1.18"/>
    </reaction>
</comment>
<comment type="subunit">
    <text evidence="1">Monomer.</text>
</comment>
<comment type="subcellular location">
    <subcellularLocation>
        <location evidence="1">Cytoplasm</location>
    </subcellularLocation>
</comment>
<comment type="similarity">
    <text evidence="1">Belongs to the class-I aminoacyl-tRNA synthetase family.</text>
</comment>
<gene>
    <name evidence="1" type="primary">glnS</name>
    <name type="ordered locus">ECDH10B_0745</name>
</gene>